<comment type="function">
    <text evidence="1 7 8 9">Monomeric heme protein which primary function is to store oxygen and facilitate its diffusion within muscle tissues. Reversibly binds oxygen through a pentacoordinated heme iron and enables its timely and efficient release as needed during periods of heightened demand (PubMed:10468637, PubMed:11304494). Depending on the oxidative conditions of tissues and cells, and in addition to its ability to bind oxygen, it also has a nitrite reductase activity whereby it regulates the production of bioactive nitric oxide (By similarity). Under stress conditions, like hypoxia and anoxia, it also protects cells against reactive oxygen species thanks to its pseudoperoxidase activity (PubMed:15132981).</text>
</comment>
<comment type="catalytic activity">
    <reaction evidence="1">
        <text>Fe(III)-heme b-[protein] + nitric oxide + H2O = Fe(II)-heme b-[protein] + nitrite + 2 H(+)</text>
        <dbReference type="Rhea" id="RHEA:77711"/>
        <dbReference type="Rhea" id="RHEA-COMP:18975"/>
        <dbReference type="Rhea" id="RHEA-COMP:18976"/>
        <dbReference type="ChEBI" id="CHEBI:15377"/>
        <dbReference type="ChEBI" id="CHEBI:15378"/>
        <dbReference type="ChEBI" id="CHEBI:16301"/>
        <dbReference type="ChEBI" id="CHEBI:16480"/>
        <dbReference type="ChEBI" id="CHEBI:55376"/>
        <dbReference type="ChEBI" id="CHEBI:60344"/>
    </reaction>
    <physiologicalReaction direction="right-to-left" evidence="1">
        <dbReference type="Rhea" id="RHEA:77713"/>
    </physiologicalReaction>
</comment>
<comment type="catalytic activity">
    <reaction evidence="1">
        <text>H2O2 + AH2 = A + 2 H2O</text>
        <dbReference type="Rhea" id="RHEA:30275"/>
        <dbReference type="ChEBI" id="CHEBI:13193"/>
        <dbReference type="ChEBI" id="CHEBI:15377"/>
        <dbReference type="ChEBI" id="CHEBI:16240"/>
        <dbReference type="ChEBI" id="CHEBI:17499"/>
    </reaction>
</comment>
<comment type="subunit">
    <text evidence="2">Monomeric.</text>
</comment>
<comment type="subcellular location">
    <subcellularLocation>
        <location evidence="1">Cytoplasm</location>
        <location evidence="1">Sarcoplasm</location>
    </subcellularLocation>
</comment>
<comment type="disruption phenotype">
    <text evidence="7 8 11">A majority of embryos lacking myoglobin/Mb die, apparently of congestive heart failure and vascular insufficiency, around E9.5/E10.5 (PubMed:11304494). Surviving Mb homozygous knockout mice are fertile and exhibit no obvious phenotypic abnormalities during ambient activities as well as normal exercise capacity and ventilatory response to low oxygen levels (PubMed:9804424). However, they display reprogrammed gene expression and increased myocardial vascularity, basal coronary flow, coronary flow reserve, and hematocrit indicative of compensatory mechanisms that tend to steepen the PO2 gradient from the capillary to the mitochondria (PubMed:10468637, PubMed:11304494).</text>
</comment>
<comment type="similarity">
    <text evidence="6">Belongs to the globin family.</text>
</comment>
<accession>P04247</accession>
<proteinExistence type="evidence at protein level"/>
<sequence length="154" mass="17070">MGLSDGEWQLVLNVWGKVEADLAGHGQEVLIGLFKTHPETLDKFDKFKNLKSEEDMKGSEDLKKHGCTVLTALGTILKKKGQHAAEIQPLAQSHATKHKIPVKYLEFISEIIIEVLKKRHSGDFGADAQGAMSKALELFRNDIAAKYKELGFQG</sequence>
<organism>
    <name type="scientific">Mus musculus</name>
    <name type="common">Mouse</name>
    <dbReference type="NCBI Taxonomy" id="10090"/>
    <lineage>
        <taxon>Eukaryota</taxon>
        <taxon>Metazoa</taxon>
        <taxon>Chordata</taxon>
        <taxon>Craniata</taxon>
        <taxon>Vertebrata</taxon>
        <taxon>Euteleostomi</taxon>
        <taxon>Mammalia</taxon>
        <taxon>Eutheria</taxon>
        <taxon>Euarchontoglires</taxon>
        <taxon>Glires</taxon>
        <taxon>Rodentia</taxon>
        <taxon>Myomorpha</taxon>
        <taxon>Muroidea</taxon>
        <taxon>Muridae</taxon>
        <taxon>Murinae</taxon>
        <taxon>Mus</taxon>
        <taxon>Mus</taxon>
    </lineage>
</organism>
<protein>
    <recommendedName>
        <fullName evidence="12">Myoglobin</fullName>
    </recommendedName>
    <alternativeName>
        <fullName evidence="1">Nitrite reductase MB</fullName>
        <ecNumber evidence="1">1.7.-.-</ecNumber>
    </alternativeName>
    <alternativeName>
        <fullName evidence="1">Pseudoperoxidase MB</fullName>
        <ecNumber evidence="1">1.11.1.-</ecNumber>
    </alternativeName>
</protein>
<evidence type="ECO:0000250" key="1">
    <source>
        <dbReference type="UniProtKB" id="P02144"/>
    </source>
</evidence>
<evidence type="ECO:0000250" key="2">
    <source>
        <dbReference type="UniProtKB" id="P02185"/>
    </source>
</evidence>
<evidence type="ECO:0000250" key="3">
    <source>
        <dbReference type="UniProtKB" id="P02189"/>
    </source>
</evidence>
<evidence type="ECO:0000250" key="4">
    <source>
        <dbReference type="UniProtKB" id="P68082"/>
    </source>
</evidence>
<evidence type="ECO:0000250" key="5">
    <source>
        <dbReference type="UniProtKB" id="Q9QZ76"/>
    </source>
</evidence>
<evidence type="ECO:0000255" key="6">
    <source>
        <dbReference type="PROSITE-ProRule" id="PRU00238"/>
    </source>
</evidence>
<evidence type="ECO:0000269" key="7">
    <source>
    </source>
</evidence>
<evidence type="ECO:0000269" key="8">
    <source>
    </source>
</evidence>
<evidence type="ECO:0000269" key="9">
    <source>
    </source>
</evidence>
<evidence type="ECO:0000269" key="10">
    <source>
    </source>
</evidence>
<evidence type="ECO:0000269" key="11">
    <source>
    </source>
</evidence>
<evidence type="ECO:0000303" key="12">
    <source>
    </source>
</evidence>
<evidence type="ECO:0000305" key="13"/>
<evidence type="ECO:0000312" key="14">
    <source>
        <dbReference type="MGI" id="MGI:96922"/>
    </source>
</evidence>
<evidence type="ECO:0007744" key="15">
    <source>
    </source>
</evidence>
<name>MYG_MOUSE</name>
<gene>
    <name evidence="14" type="primary">Mb</name>
</gene>
<keyword id="KW-0963">Cytoplasm</keyword>
<keyword id="KW-0903">Direct protein sequencing</keyword>
<keyword id="KW-0349">Heme</keyword>
<keyword id="KW-0408">Iron</keyword>
<keyword id="KW-0479">Metal-binding</keyword>
<keyword id="KW-0514">Muscle protein</keyword>
<keyword id="KW-0560">Oxidoreductase</keyword>
<keyword id="KW-0561">Oxygen transport</keyword>
<keyword id="KW-0597">Phosphoprotein</keyword>
<keyword id="KW-1185">Reference proteome</keyword>
<keyword id="KW-0813">Transport</keyword>
<feature type="initiator methionine" description="Removed" evidence="10">
    <location>
        <position position="1"/>
    </location>
</feature>
<feature type="chain" id="PRO_0000053319" description="Myoglobin">
    <location>
        <begin position="2"/>
        <end position="154"/>
    </location>
</feature>
<feature type="domain" description="Globin" evidence="6">
    <location>
        <begin position="2"/>
        <end position="148"/>
    </location>
</feature>
<feature type="binding site" evidence="4">
    <location>
        <position position="65"/>
    </location>
    <ligand>
        <name>nitrite</name>
        <dbReference type="ChEBI" id="CHEBI:16301"/>
    </ligand>
</feature>
<feature type="binding site" evidence="3 6">
    <location>
        <position position="65"/>
    </location>
    <ligand>
        <name>O2</name>
        <dbReference type="ChEBI" id="CHEBI:15379"/>
    </ligand>
</feature>
<feature type="binding site" description="proximal binding residue" evidence="1">
    <location>
        <position position="94"/>
    </location>
    <ligand>
        <name>heme b</name>
        <dbReference type="ChEBI" id="CHEBI:60344"/>
    </ligand>
    <ligandPart>
        <name>Fe</name>
        <dbReference type="ChEBI" id="CHEBI:18248"/>
    </ligandPart>
</feature>
<feature type="modified residue" description="Phosphoserine" evidence="5">
    <location>
        <position position="4"/>
    </location>
</feature>
<feature type="modified residue" description="Phosphothreonine" evidence="15">
    <location>
        <position position="68"/>
    </location>
</feature>
<feature type="modified residue" description="Phosphothreonine" evidence="15">
    <location>
        <position position="75"/>
    </location>
</feature>
<feature type="modified residue" description="Phosphoserine" evidence="15">
    <location>
        <position position="121"/>
    </location>
</feature>
<feature type="sequence conflict" description="In Ref. 3; AA sequence." evidence="13" ref="3">
    <original>L</original>
    <variation>K</variation>
    <location>
        <position position="116"/>
    </location>
</feature>
<reference key="1">
    <citation type="journal article" date="1986" name="Eur. J. Biochem.">
        <title>The mouse myoglobin gene. Characterisation and sequence comparison with other mammalian myoglobin genes.</title>
        <authorList>
            <person name="Blanchetot A."/>
            <person name="Price M."/>
            <person name="Jeffreys A.J."/>
        </authorList>
    </citation>
    <scope>NUCLEOTIDE SEQUENCE [GENOMIC DNA]</scope>
</reference>
<reference key="2">
    <citation type="journal article" date="2004" name="Genome Res.">
        <title>The status, quality, and expansion of the NIH full-length cDNA project: the Mammalian Gene Collection (MGC).</title>
        <authorList>
            <consortium name="The MGC Project Team"/>
        </authorList>
    </citation>
    <scope>NUCLEOTIDE SEQUENCE [LARGE SCALE MRNA]</scope>
    <source>
        <strain>FVB/N</strain>
        <tissue>Mammary gland</tissue>
    </source>
</reference>
<reference key="3">
    <citation type="journal article" date="1985" name="FEBS Lett.">
        <title>The myoglobin of rodents Proechimys guairae (casiragua) and Mus musculus (house mouse).</title>
        <authorList>
            <person name="Harris D.E."/>
            <person name="Gurnett A.M."/>
            <person name="Lehmann H."/>
            <person name="Joysey K.A."/>
        </authorList>
    </citation>
    <scope>PROTEIN SEQUENCE OF 2-154</scope>
</reference>
<reference key="4">
    <citation type="journal article" date="1998" name="Nature">
        <title>Mice without myoglobin.</title>
        <authorList>
            <person name="Garry D.J."/>
            <person name="Ordway G.A."/>
            <person name="Lorenz J.N."/>
            <person name="Radford N.B."/>
            <person name="Chin E.R."/>
            <person name="Grange R.W."/>
            <person name="Bassel-Duby R."/>
            <person name="Williams R.S."/>
        </authorList>
    </citation>
    <scope>DISRUPTION PHENOTYPE</scope>
</reference>
<reference key="5">
    <citation type="journal article" date="1999" name="Proc. Natl. Acad. Sci. U.S.A.">
        <title>Disruption of myoglobin in mice induces multiple compensatory mechanisms.</title>
        <authorList>
            <person name="Goedecke A."/>
            <person name="Floegel U."/>
            <person name="Zanger K."/>
            <person name="Ding Z."/>
            <person name="Hirchenhain J."/>
            <person name="Decking U.K."/>
            <person name="Schrader J."/>
        </authorList>
    </citation>
    <scope>FUNCTION</scope>
    <scope>DISRUPTION PHENOTYPE</scope>
</reference>
<reference key="6">
    <citation type="journal article" date="2001" name="Circ. Res.">
        <title>Adaptive mechanisms that preserve cardiac function in mice without myoglobin.</title>
        <authorList>
            <person name="Meeson A.P."/>
            <person name="Radford N."/>
            <person name="Shelton J.M."/>
            <person name="Mammen P.P."/>
            <person name="DiMaio J.M."/>
            <person name="Hutcheson K."/>
            <person name="Kong Y."/>
            <person name="Elterman J."/>
            <person name="Williams R.S."/>
            <person name="Garry D.J."/>
        </authorList>
    </citation>
    <scope>FUNCTION</scope>
    <scope>DISRUPTION PHENOTYPE</scope>
</reference>
<reference key="7">
    <citation type="journal article" date="2004" name="FASEB J.">
        <title>Role of myoglobin in the antioxidant defense of the heart.</title>
        <authorList>
            <person name="Floegel U."/>
            <person name="Goedecke A."/>
            <person name="Klotz L.O."/>
            <person name="Schrader J."/>
        </authorList>
    </citation>
    <scope>FUNCTION</scope>
</reference>
<reference key="8">
    <citation type="journal article" date="2010" name="Cell">
        <title>A tissue-specific atlas of mouse protein phosphorylation and expression.</title>
        <authorList>
            <person name="Huttlin E.L."/>
            <person name="Jedrychowski M.P."/>
            <person name="Elias J.E."/>
            <person name="Goswami T."/>
            <person name="Rad R."/>
            <person name="Beausoleil S.A."/>
            <person name="Villen J."/>
            <person name="Haas W."/>
            <person name="Sowa M.E."/>
            <person name="Gygi S.P."/>
        </authorList>
    </citation>
    <scope>PHOSPHORYLATION [LARGE SCALE ANALYSIS] AT THR-68; THR-75 AND SER-121</scope>
    <scope>IDENTIFICATION BY MASS SPECTROMETRY [LARGE SCALE ANALYSIS]</scope>
    <source>
        <tissue>Brown adipose tissue</tissue>
        <tissue>Heart</tissue>
        <tissue>Kidney</tissue>
        <tissue>Liver</tissue>
        <tissue>Lung</tissue>
    </source>
</reference>
<dbReference type="EC" id="1.7.-.-" evidence="1"/>
<dbReference type="EC" id="1.11.1.-" evidence="1"/>
<dbReference type="EMBL" id="BC025172">
    <property type="protein sequence ID" value="AAH25172.1"/>
    <property type="molecule type" value="mRNA"/>
</dbReference>
<dbReference type="EMBL" id="X04405">
    <property type="protein sequence ID" value="CAA27994.1"/>
    <property type="molecule type" value="Genomic_DNA"/>
</dbReference>
<dbReference type="EMBL" id="X04417">
    <property type="protein sequence ID" value="CAA27994.1"/>
    <property type="status" value="JOINED"/>
    <property type="molecule type" value="Genomic_DNA"/>
</dbReference>
<dbReference type="CCDS" id="CCDS27597.1"/>
<dbReference type="PIR" id="A25799">
    <property type="entry name" value="MYMS"/>
</dbReference>
<dbReference type="RefSeq" id="NP_001157519.1">
    <property type="nucleotide sequence ID" value="NM_001164047.1"/>
</dbReference>
<dbReference type="RefSeq" id="NP_001157520.1">
    <property type="nucleotide sequence ID" value="NM_001164048.1"/>
</dbReference>
<dbReference type="RefSeq" id="NP_038621.2">
    <property type="nucleotide sequence ID" value="NM_013593.3"/>
</dbReference>
<dbReference type="SMR" id="P04247"/>
<dbReference type="BioGRID" id="201329">
    <property type="interactions" value="2"/>
</dbReference>
<dbReference type="FunCoup" id="P04247">
    <property type="interactions" value="56"/>
</dbReference>
<dbReference type="IntAct" id="P04247">
    <property type="interactions" value="3"/>
</dbReference>
<dbReference type="MINT" id="P04247"/>
<dbReference type="STRING" id="10090.ENSMUSP00000125995"/>
<dbReference type="GlyGen" id="P04247">
    <property type="glycosylation" value="1 site, 1 O-linked glycan (1 site)"/>
</dbReference>
<dbReference type="iPTMnet" id="P04247"/>
<dbReference type="MetOSite" id="P04247"/>
<dbReference type="PhosphoSitePlus" id="P04247"/>
<dbReference type="CPTAC" id="non-CPTAC-3847"/>
<dbReference type="jPOST" id="P04247"/>
<dbReference type="PaxDb" id="10090-ENSMUSP00000125995"/>
<dbReference type="PeptideAtlas" id="P04247"/>
<dbReference type="ProteomicsDB" id="252629"/>
<dbReference type="Antibodypedia" id="292">
    <property type="antibodies" value="1348 antibodies from 47 providers"/>
</dbReference>
<dbReference type="DNASU" id="17189"/>
<dbReference type="Ensembl" id="ENSMUST00000019037.10">
    <property type="protein sequence ID" value="ENSMUSP00000019037.9"/>
    <property type="gene ID" value="ENSMUSG00000018893.16"/>
</dbReference>
<dbReference type="Ensembl" id="ENSMUST00000166179.9">
    <property type="protein sequence ID" value="ENSMUSP00000128399.2"/>
    <property type="gene ID" value="ENSMUSG00000018893.16"/>
</dbReference>
<dbReference type="Ensembl" id="ENSMUST00000169226.9">
    <property type="protein sequence ID" value="ENSMUSP00000125995.2"/>
    <property type="gene ID" value="ENSMUSG00000018893.16"/>
</dbReference>
<dbReference type="Ensembl" id="ENSMUST00000229423.2">
    <property type="protein sequence ID" value="ENSMUSP00000155115.2"/>
    <property type="gene ID" value="ENSMUSG00000018893.16"/>
</dbReference>
<dbReference type="GeneID" id="17189"/>
<dbReference type="KEGG" id="mmu:17189"/>
<dbReference type="UCSC" id="uc007wmx.2">
    <property type="organism name" value="mouse"/>
</dbReference>
<dbReference type="AGR" id="MGI:96922"/>
<dbReference type="CTD" id="4151"/>
<dbReference type="MGI" id="MGI:96922">
    <property type="gene designation" value="Mb"/>
</dbReference>
<dbReference type="VEuPathDB" id="HostDB:ENSMUSG00000018893"/>
<dbReference type="eggNOG" id="KOG3378">
    <property type="taxonomic scope" value="Eukaryota"/>
</dbReference>
<dbReference type="GeneTree" id="ENSGT00940000160809"/>
<dbReference type="HOGENOM" id="CLU_003827_18_0_1"/>
<dbReference type="InParanoid" id="P04247"/>
<dbReference type="OMA" id="VIIRMFQ"/>
<dbReference type="OrthoDB" id="6344802at2759"/>
<dbReference type="PhylomeDB" id="P04247"/>
<dbReference type="TreeFam" id="TF332967"/>
<dbReference type="Reactome" id="R-MMU-8981607">
    <property type="pathway name" value="Intracellular oxygen transport"/>
</dbReference>
<dbReference type="BioGRID-ORCS" id="17189">
    <property type="hits" value="2 hits in 81 CRISPR screens"/>
</dbReference>
<dbReference type="ChiTaRS" id="Mb">
    <property type="organism name" value="mouse"/>
</dbReference>
<dbReference type="PRO" id="PR:P04247"/>
<dbReference type="Proteomes" id="UP000000589">
    <property type="component" value="Chromosome 15"/>
</dbReference>
<dbReference type="RNAct" id="P04247">
    <property type="molecule type" value="protein"/>
</dbReference>
<dbReference type="Bgee" id="ENSMUSG00000018893">
    <property type="expression patterns" value="Expressed in digastric muscle group and 138 other cell types or tissues"/>
</dbReference>
<dbReference type="ExpressionAtlas" id="P04247">
    <property type="expression patterns" value="baseline and differential"/>
</dbReference>
<dbReference type="GO" id="GO:0016528">
    <property type="term" value="C:sarcoplasm"/>
    <property type="evidence" value="ECO:0000250"/>
    <property type="project" value="UniProtKB"/>
</dbReference>
<dbReference type="GO" id="GO:0020037">
    <property type="term" value="F:heme binding"/>
    <property type="evidence" value="ECO:0007669"/>
    <property type="project" value="InterPro"/>
</dbReference>
<dbReference type="GO" id="GO:0046872">
    <property type="term" value="F:metal ion binding"/>
    <property type="evidence" value="ECO:0007669"/>
    <property type="project" value="UniProtKB-KW"/>
</dbReference>
<dbReference type="GO" id="GO:0098809">
    <property type="term" value="F:nitrite reductase activity"/>
    <property type="evidence" value="ECO:0000250"/>
    <property type="project" value="UniProtKB"/>
</dbReference>
<dbReference type="GO" id="GO:0019825">
    <property type="term" value="F:oxygen binding"/>
    <property type="evidence" value="ECO:0007669"/>
    <property type="project" value="Ensembl"/>
</dbReference>
<dbReference type="GO" id="GO:0005344">
    <property type="term" value="F:oxygen carrier activity"/>
    <property type="evidence" value="ECO:0000250"/>
    <property type="project" value="UniProtKB"/>
</dbReference>
<dbReference type="GO" id="GO:0004601">
    <property type="term" value="F:peroxidase activity"/>
    <property type="evidence" value="ECO:0000250"/>
    <property type="project" value="UniProtKB"/>
</dbReference>
<dbReference type="GO" id="GO:0050873">
    <property type="term" value="P:brown fat cell differentiation"/>
    <property type="evidence" value="ECO:0000314"/>
    <property type="project" value="MGI"/>
</dbReference>
<dbReference type="GO" id="GO:0043353">
    <property type="term" value="P:enucleate erythrocyte differentiation"/>
    <property type="evidence" value="ECO:0000315"/>
    <property type="project" value="MGI"/>
</dbReference>
<dbReference type="GO" id="GO:0007507">
    <property type="term" value="P:heart development"/>
    <property type="evidence" value="ECO:0000315"/>
    <property type="project" value="MGI"/>
</dbReference>
<dbReference type="GO" id="GO:0019430">
    <property type="term" value="P:removal of superoxide radicals"/>
    <property type="evidence" value="ECO:0000250"/>
    <property type="project" value="UniProtKB"/>
</dbReference>
<dbReference type="GO" id="GO:0009725">
    <property type="term" value="P:response to hormone"/>
    <property type="evidence" value="ECO:0007669"/>
    <property type="project" value="Ensembl"/>
</dbReference>
<dbReference type="GO" id="GO:0042542">
    <property type="term" value="P:response to hydrogen peroxide"/>
    <property type="evidence" value="ECO:0007669"/>
    <property type="project" value="Ensembl"/>
</dbReference>
<dbReference type="GO" id="GO:0001666">
    <property type="term" value="P:response to hypoxia"/>
    <property type="evidence" value="ECO:0000315"/>
    <property type="project" value="MGI"/>
</dbReference>
<dbReference type="GO" id="GO:0031444">
    <property type="term" value="P:slow-twitch skeletal muscle fiber contraction"/>
    <property type="evidence" value="ECO:0007669"/>
    <property type="project" value="Ensembl"/>
</dbReference>
<dbReference type="Gene3D" id="6.10.140.2100">
    <property type="match status" value="1"/>
</dbReference>
<dbReference type="Gene3D" id="6.10.140.2110">
    <property type="match status" value="1"/>
</dbReference>
<dbReference type="InterPro" id="IPR000971">
    <property type="entry name" value="Globin"/>
</dbReference>
<dbReference type="InterPro" id="IPR009050">
    <property type="entry name" value="Globin-like_sf"/>
</dbReference>
<dbReference type="InterPro" id="IPR002335">
    <property type="entry name" value="Myoglobin"/>
</dbReference>
<dbReference type="PANTHER" id="PTHR47132">
    <property type="entry name" value="MYOGLOBIN"/>
    <property type="match status" value="1"/>
</dbReference>
<dbReference type="PANTHER" id="PTHR47132:SF1">
    <property type="entry name" value="MYOGLOBIN"/>
    <property type="match status" value="1"/>
</dbReference>
<dbReference type="Pfam" id="PF00042">
    <property type="entry name" value="Globin"/>
    <property type="match status" value="1"/>
</dbReference>
<dbReference type="PRINTS" id="PR00613">
    <property type="entry name" value="MYOGLOBIN"/>
</dbReference>
<dbReference type="SUPFAM" id="SSF46458">
    <property type="entry name" value="Globin-like"/>
    <property type="match status" value="1"/>
</dbReference>
<dbReference type="PROSITE" id="PS01033">
    <property type="entry name" value="GLOBIN"/>
    <property type="match status" value="1"/>
</dbReference>